<reference key="1">
    <citation type="journal article" date="1996" name="DNA Res.">
        <title>Sequence analysis of the genome of the unicellular cyanobacterium Synechocystis sp. strain PCC6803. II. Sequence determination of the entire genome and assignment of potential protein-coding regions.</title>
        <authorList>
            <person name="Kaneko T."/>
            <person name="Sato S."/>
            <person name="Kotani H."/>
            <person name="Tanaka A."/>
            <person name="Asamizu E."/>
            <person name="Nakamura Y."/>
            <person name="Miyajima N."/>
            <person name="Hirosawa M."/>
            <person name="Sugiura M."/>
            <person name="Sasamoto S."/>
            <person name="Kimura T."/>
            <person name="Hosouchi T."/>
            <person name="Matsuno A."/>
            <person name="Muraki A."/>
            <person name="Nakazaki N."/>
            <person name="Naruo K."/>
            <person name="Okumura S."/>
            <person name="Shimpo S."/>
            <person name="Takeuchi C."/>
            <person name="Wada T."/>
            <person name="Watanabe A."/>
            <person name="Yamada M."/>
            <person name="Yasuda M."/>
            <person name="Tabata S."/>
        </authorList>
    </citation>
    <scope>NUCLEOTIDE SEQUENCE [LARGE SCALE GENOMIC DNA]</scope>
    <source>
        <strain>ATCC 27184 / PCC 6803 / Kazusa</strain>
    </source>
</reference>
<reference key="2">
    <citation type="journal article" date="1997" name="Electrophoresis">
        <title>Towards a proteome project of cyanobacterium Synechocystis sp. strain PCC6803: linking 130 protein spots with their respective genes.</title>
        <authorList>
            <person name="Sazuka T."/>
            <person name="Ohara O."/>
        </authorList>
    </citation>
    <scope>PROTEIN SEQUENCE OF 1-8</scope>
</reference>
<comment type="function">
    <text>Catalyzes the synthesis of activated sulfate.</text>
</comment>
<comment type="catalytic activity">
    <reaction>
        <text>adenosine 5'-phosphosulfate + ATP = 3'-phosphoadenylyl sulfate + ADP + H(+)</text>
        <dbReference type="Rhea" id="RHEA:24152"/>
        <dbReference type="ChEBI" id="CHEBI:15378"/>
        <dbReference type="ChEBI" id="CHEBI:30616"/>
        <dbReference type="ChEBI" id="CHEBI:58243"/>
        <dbReference type="ChEBI" id="CHEBI:58339"/>
        <dbReference type="ChEBI" id="CHEBI:456216"/>
        <dbReference type="EC" id="2.7.1.25"/>
    </reaction>
</comment>
<comment type="pathway">
    <text>Sulfur metabolism; hydrogen sulfide biosynthesis; sulfite from sulfate: step 2/3.</text>
</comment>
<comment type="similarity">
    <text evidence="2">Belongs to the APS kinase family.</text>
</comment>
<accession>P72940</accession>
<evidence type="ECO:0000250" key="1"/>
<evidence type="ECO:0000305" key="2"/>
<evidence type="ECO:0007829" key="3">
    <source>
        <dbReference type="PDB" id="5CB6"/>
    </source>
</evidence>
<evidence type="ECO:0007829" key="4">
    <source>
        <dbReference type="PDB" id="5CB8"/>
    </source>
</evidence>
<keyword id="KW-0002">3D-structure</keyword>
<keyword id="KW-0067">ATP-binding</keyword>
<keyword id="KW-0903">Direct protein sequencing</keyword>
<keyword id="KW-0418">Kinase</keyword>
<keyword id="KW-0547">Nucleotide-binding</keyword>
<keyword id="KW-0597">Phosphoprotein</keyword>
<keyword id="KW-1185">Reference proteome</keyword>
<keyword id="KW-0808">Transferase</keyword>
<protein>
    <recommendedName>
        <fullName>Probable adenylyl-sulfate kinase</fullName>
        <ecNumber>2.7.1.25</ecNumber>
    </recommendedName>
    <alternativeName>
        <fullName>APS kinase</fullName>
    </alternativeName>
    <alternativeName>
        <fullName>ATP adenosine-5'-phosphosulfate 3'-phosphotransferase</fullName>
    </alternativeName>
    <alternativeName>
        <fullName>Adenosine-5'-phosphosulfate kinase</fullName>
    </alternativeName>
</protein>
<feature type="chain" id="PRO_0000105922" description="Probable adenylyl-sulfate kinase">
    <location>
        <begin position="1"/>
        <end position="177"/>
    </location>
</feature>
<feature type="active site" description="Phosphoserine intermediate" evidence="1">
    <location>
        <position position="86"/>
    </location>
</feature>
<feature type="binding site" evidence="1">
    <location>
        <begin position="12"/>
        <end position="19"/>
    </location>
    <ligand>
        <name>ATP</name>
        <dbReference type="ChEBI" id="CHEBI:30616"/>
    </ligand>
</feature>
<feature type="strand" evidence="4">
    <location>
        <begin position="6"/>
        <end position="11"/>
    </location>
</feature>
<feature type="helix" evidence="4">
    <location>
        <begin position="18"/>
        <end position="31"/>
    </location>
</feature>
<feature type="strand" evidence="4">
    <location>
        <begin position="36"/>
        <end position="40"/>
    </location>
</feature>
<feature type="helix" evidence="4">
    <location>
        <begin position="41"/>
        <end position="44"/>
    </location>
</feature>
<feature type="turn" evidence="4">
    <location>
        <begin position="45"/>
        <end position="51"/>
    </location>
</feature>
<feature type="helix" evidence="4">
    <location>
        <begin position="56"/>
        <end position="74"/>
    </location>
</feature>
<feature type="turn" evidence="4">
    <location>
        <begin position="75"/>
        <end position="77"/>
    </location>
</feature>
<feature type="strand" evidence="4">
    <location>
        <begin position="79"/>
        <end position="83"/>
    </location>
</feature>
<feature type="helix" evidence="4">
    <location>
        <begin position="89"/>
        <end position="99"/>
    </location>
</feature>
<feature type="strand" evidence="4">
    <location>
        <begin position="100"/>
        <end position="107"/>
    </location>
</feature>
<feature type="helix" evidence="4">
    <location>
        <begin position="111"/>
        <end position="117"/>
    </location>
</feature>
<feature type="helix" evidence="4">
    <location>
        <begin position="122"/>
        <end position="127"/>
    </location>
</feature>
<feature type="strand" evidence="3">
    <location>
        <begin position="129"/>
        <end position="133"/>
    </location>
</feature>
<feature type="turn" evidence="4">
    <location>
        <begin position="135"/>
        <end position="137"/>
    </location>
</feature>
<feature type="strand" evidence="4">
    <location>
        <begin position="148"/>
        <end position="151"/>
    </location>
</feature>
<feature type="turn" evidence="4">
    <location>
        <begin position="153"/>
        <end position="155"/>
    </location>
</feature>
<feature type="helix" evidence="4">
    <location>
        <begin position="158"/>
        <end position="171"/>
    </location>
</feature>
<gene>
    <name type="primary">cysC</name>
    <name type="ordered locus">slr0676</name>
</gene>
<organism>
    <name type="scientific">Synechocystis sp. (strain ATCC 27184 / PCC 6803 / Kazusa)</name>
    <dbReference type="NCBI Taxonomy" id="1111708"/>
    <lineage>
        <taxon>Bacteria</taxon>
        <taxon>Bacillati</taxon>
        <taxon>Cyanobacteriota</taxon>
        <taxon>Cyanophyceae</taxon>
        <taxon>Synechococcales</taxon>
        <taxon>Merismopediaceae</taxon>
        <taxon>Synechocystis</taxon>
    </lineage>
</organism>
<name>CYSC_SYNY3</name>
<proteinExistence type="evidence at protein level"/>
<sequence length="177" mass="19674">MQQRGVTIWLTGLSGAGKTTITHALEKKLRDSGYRLEVLDGDVVRTNLTKGLGFSKEDRDTNIRRIGFVSHLLTRNGVIVLVSAISPYAAIRQEVKHTIGDFLEVFVNAPLAVCEERDVKGLYAKARSGEIKGFTGIDDPYEPPTNPDVECRTDLEELDESVGKIWQKLVDLKYIEG</sequence>
<dbReference type="EC" id="2.7.1.25"/>
<dbReference type="EMBL" id="BA000022">
    <property type="protein sequence ID" value="BAA16957.1"/>
    <property type="molecule type" value="Genomic_DNA"/>
</dbReference>
<dbReference type="PIR" id="S74917">
    <property type="entry name" value="S74917"/>
</dbReference>
<dbReference type="PDB" id="5CB6">
    <property type="method" value="X-ray"/>
    <property type="resolution" value="2.79 A"/>
    <property type="chains" value="A/B/C/D/E/F=1-177"/>
</dbReference>
<dbReference type="PDB" id="5CB8">
    <property type="method" value="X-ray"/>
    <property type="resolution" value="1.88 A"/>
    <property type="chains" value="A/B=1-177"/>
</dbReference>
<dbReference type="PDBsum" id="5CB6"/>
<dbReference type="PDBsum" id="5CB8"/>
<dbReference type="SMR" id="P72940"/>
<dbReference type="FunCoup" id="P72940">
    <property type="interactions" value="120"/>
</dbReference>
<dbReference type="IntAct" id="P72940">
    <property type="interactions" value="2"/>
</dbReference>
<dbReference type="STRING" id="1148.gene:10497817"/>
<dbReference type="PaxDb" id="1148-1652032"/>
<dbReference type="EnsemblBacteria" id="BAA16957">
    <property type="protein sequence ID" value="BAA16957"/>
    <property type="gene ID" value="BAA16957"/>
</dbReference>
<dbReference type="KEGG" id="syn:slr0676"/>
<dbReference type="eggNOG" id="COG0529">
    <property type="taxonomic scope" value="Bacteria"/>
</dbReference>
<dbReference type="InParanoid" id="P72940"/>
<dbReference type="PhylomeDB" id="P72940"/>
<dbReference type="BRENDA" id="2.7.1.25">
    <property type="organism ID" value="382"/>
</dbReference>
<dbReference type="UniPathway" id="UPA00140">
    <property type="reaction ID" value="UER00205"/>
</dbReference>
<dbReference type="EvolutionaryTrace" id="P72940"/>
<dbReference type="Proteomes" id="UP000001425">
    <property type="component" value="Chromosome"/>
</dbReference>
<dbReference type="GO" id="GO:0004020">
    <property type="term" value="F:adenylylsulfate kinase activity"/>
    <property type="evidence" value="ECO:0007669"/>
    <property type="project" value="UniProtKB-UniRule"/>
</dbReference>
<dbReference type="GO" id="GO:0005524">
    <property type="term" value="F:ATP binding"/>
    <property type="evidence" value="ECO:0007669"/>
    <property type="project" value="UniProtKB-UniRule"/>
</dbReference>
<dbReference type="GO" id="GO:0004781">
    <property type="term" value="F:sulfate adenylyltransferase (ATP) activity"/>
    <property type="evidence" value="ECO:0000318"/>
    <property type="project" value="GO_Central"/>
</dbReference>
<dbReference type="GO" id="GO:0070814">
    <property type="term" value="P:hydrogen sulfide biosynthetic process"/>
    <property type="evidence" value="ECO:0007669"/>
    <property type="project" value="UniProtKB-UniRule"/>
</dbReference>
<dbReference type="GO" id="GO:0019379">
    <property type="term" value="P:sulfate assimilation, phosphoadenylyl sulfate reduction by phosphoadenylyl-sulfate reductase (thioredoxin)"/>
    <property type="evidence" value="ECO:0000318"/>
    <property type="project" value="GO_Central"/>
</dbReference>
<dbReference type="CDD" id="cd02027">
    <property type="entry name" value="APSK"/>
    <property type="match status" value="1"/>
</dbReference>
<dbReference type="FunFam" id="3.40.50.300:FF:000802">
    <property type="entry name" value="Sulfate adenylyltransferase"/>
    <property type="match status" value="1"/>
</dbReference>
<dbReference type="Gene3D" id="3.40.50.300">
    <property type="entry name" value="P-loop containing nucleotide triphosphate hydrolases"/>
    <property type="match status" value="1"/>
</dbReference>
<dbReference type="HAMAP" id="MF_00065">
    <property type="entry name" value="Adenylyl_sulf_kinase"/>
    <property type="match status" value="1"/>
</dbReference>
<dbReference type="InterPro" id="IPR002891">
    <property type="entry name" value="APS_kinase"/>
</dbReference>
<dbReference type="InterPro" id="IPR027417">
    <property type="entry name" value="P-loop_NTPase"/>
</dbReference>
<dbReference type="InterPro" id="IPR050512">
    <property type="entry name" value="Sulf_AdTrans/APS_kinase"/>
</dbReference>
<dbReference type="NCBIfam" id="TIGR00455">
    <property type="entry name" value="apsK"/>
    <property type="match status" value="1"/>
</dbReference>
<dbReference type="NCBIfam" id="NF002059">
    <property type="entry name" value="PRK00889.1"/>
    <property type="match status" value="1"/>
</dbReference>
<dbReference type="NCBIfam" id="NF003013">
    <property type="entry name" value="PRK03846.1"/>
    <property type="match status" value="1"/>
</dbReference>
<dbReference type="PANTHER" id="PTHR42700">
    <property type="entry name" value="SULFATE ADENYLYLTRANSFERASE"/>
    <property type="match status" value="1"/>
</dbReference>
<dbReference type="PANTHER" id="PTHR42700:SF1">
    <property type="entry name" value="SULFATE ADENYLYLTRANSFERASE"/>
    <property type="match status" value="1"/>
</dbReference>
<dbReference type="Pfam" id="PF01583">
    <property type="entry name" value="APS_kinase"/>
    <property type="match status" value="1"/>
</dbReference>
<dbReference type="SUPFAM" id="SSF52540">
    <property type="entry name" value="P-loop containing nucleoside triphosphate hydrolases"/>
    <property type="match status" value="1"/>
</dbReference>